<organism>
    <name type="scientific">Bos taurus</name>
    <name type="common">Bovine</name>
    <dbReference type="NCBI Taxonomy" id="9913"/>
    <lineage>
        <taxon>Eukaryota</taxon>
        <taxon>Metazoa</taxon>
        <taxon>Chordata</taxon>
        <taxon>Craniata</taxon>
        <taxon>Vertebrata</taxon>
        <taxon>Euteleostomi</taxon>
        <taxon>Mammalia</taxon>
        <taxon>Eutheria</taxon>
        <taxon>Laurasiatheria</taxon>
        <taxon>Artiodactyla</taxon>
        <taxon>Ruminantia</taxon>
        <taxon>Pecora</taxon>
        <taxon>Bovidae</taxon>
        <taxon>Bovinae</taxon>
        <taxon>Bos</taxon>
    </lineage>
</organism>
<sequence>MLWFQGAIPAAIASAKRSGAVFVVFVAGDDEQSTQMAASWEDEKVTEASSNSFVAIKIDTRSEACLQFSQIYPVVCVPSSFFIGDSGIPLEVIAGSISADELVTRIHKVRQMHSLKGEASLANGSQSEGSVSTPSASFEHNNTSENCQSRNVELCETPSTSDTKSDSATGGESSGQTTVSQEPSGCSNQRPTEDLTVRVERLTKKLEERREEKRKEEEQREIKKEIERRKTGKEMLDYKRKQEEELTKRMLEERNREKAEDRAARERIKQQIALDRAERAARFAKTKEEVEAAKAAALLAKQAEMEIKRETSTKERSTVARIQFRLPDGSSFTNQFPSDAPLEEARQFAAQTVGNTYGNFSLATMFPRREFTKEDYKKKLLDLELAPSASVVLLPAGRPTTSMVHSSSGDFWTLLGTVLYPFLAIWRLISNFLFSNPPPAQTSVRAASLETSNLASSSNSEKREPVRKRVLEKRGEDFKKEGKIYRLRTQDDGEDENNTWNGNSTQQM</sequence>
<evidence type="ECO:0000250" key="1">
    <source>
        <dbReference type="UniProtKB" id="Q92575"/>
    </source>
</evidence>
<evidence type="ECO:0000255" key="2"/>
<evidence type="ECO:0000255" key="3">
    <source>
        <dbReference type="PROSITE-ProRule" id="PRU00215"/>
    </source>
</evidence>
<evidence type="ECO:0000256" key="4">
    <source>
        <dbReference type="SAM" id="MobiDB-lite"/>
    </source>
</evidence>
<evidence type="ECO:0000305" key="5"/>
<name>UBXN4_BOVIN</name>
<gene>
    <name type="primary">UBXN4</name>
    <name type="synonym">UBXD2</name>
</gene>
<reference key="1">
    <citation type="submission" date="2005-08" db="EMBL/GenBank/DDBJ databases">
        <authorList>
            <consortium name="NIH - Mammalian Gene Collection (MGC) project"/>
        </authorList>
    </citation>
    <scope>NUCLEOTIDE SEQUENCE [LARGE SCALE MRNA]</scope>
    <source>
        <strain>Hereford</strain>
        <tissue>Hypothalamus</tissue>
    </source>
</reference>
<dbReference type="EMBL" id="BC103096">
    <property type="protein sequence ID" value="AAI03097.1"/>
    <property type="status" value="ALT_SEQ"/>
    <property type="molecule type" value="mRNA"/>
</dbReference>
<dbReference type="RefSeq" id="NP_001030491.2">
    <property type="nucleotide sequence ID" value="NM_001035414.2"/>
</dbReference>
<dbReference type="SMR" id="Q3ZBU9"/>
<dbReference type="FunCoup" id="Q3ZBU9">
    <property type="interactions" value="3901"/>
</dbReference>
<dbReference type="STRING" id="9913.ENSBTAP00000020184"/>
<dbReference type="PaxDb" id="9913-ENSBTAP00000020184"/>
<dbReference type="PeptideAtlas" id="Q3ZBU9"/>
<dbReference type="Ensembl" id="ENSBTAT00000020184.7">
    <property type="protein sequence ID" value="ENSBTAP00000020184.5"/>
    <property type="gene ID" value="ENSBTAG00000015169.7"/>
</dbReference>
<dbReference type="GeneID" id="536181"/>
<dbReference type="KEGG" id="bta:536181"/>
<dbReference type="CTD" id="23190"/>
<dbReference type="VEuPathDB" id="HostDB:ENSBTAG00000015169"/>
<dbReference type="VGNC" id="VGNC:36627">
    <property type="gene designation" value="UBXN4"/>
</dbReference>
<dbReference type="eggNOG" id="KOG2507">
    <property type="taxonomic scope" value="Eukaryota"/>
</dbReference>
<dbReference type="GeneTree" id="ENSGT00940000160205"/>
<dbReference type="HOGENOM" id="CLU_039222_1_1_1"/>
<dbReference type="InParanoid" id="Q3ZBU9"/>
<dbReference type="OMA" id="FEPNNTS"/>
<dbReference type="OrthoDB" id="2445133at2759"/>
<dbReference type="TreeFam" id="TF317466"/>
<dbReference type="Proteomes" id="UP000009136">
    <property type="component" value="Chromosome 2"/>
</dbReference>
<dbReference type="Bgee" id="ENSBTAG00000015169">
    <property type="expression patterns" value="Expressed in spermatid and 108 other cell types or tissues"/>
</dbReference>
<dbReference type="GO" id="GO:0005829">
    <property type="term" value="C:cytosol"/>
    <property type="evidence" value="ECO:0007669"/>
    <property type="project" value="Ensembl"/>
</dbReference>
<dbReference type="GO" id="GO:0005783">
    <property type="term" value="C:endoplasmic reticulum"/>
    <property type="evidence" value="ECO:0000318"/>
    <property type="project" value="GO_Central"/>
</dbReference>
<dbReference type="GO" id="GO:0005789">
    <property type="term" value="C:endoplasmic reticulum membrane"/>
    <property type="evidence" value="ECO:0007669"/>
    <property type="project" value="UniProtKB-SubCell"/>
</dbReference>
<dbReference type="GO" id="GO:0005635">
    <property type="term" value="C:nuclear envelope"/>
    <property type="evidence" value="ECO:0007669"/>
    <property type="project" value="UniProtKB-SubCell"/>
</dbReference>
<dbReference type="GO" id="GO:0036503">
    <property type="term" value="P:ERAD pathway"/>
    <property type="evidence" value="ECO:0000250"/>
    <property type="project" value="UniProtKB"/>
</dbReference>
<dbReference type="GO" id="GO:0006986">
    <property type="term" value="P:response to unfolded protein"/>
    <property type="evidence" value="ECO:0007669"/>
    <property type="project" value="UniProtKB-KW"/>
</dbReference>
<dbReference type="CDD" id="cd16117">
    <property type="entry name" value="UBX_UBXN4"/>
    <property type="match status" value="1"/>
</dbReference>
<dbReference type="FunFam" id="3.10.20.90:FF:000196">
    <property type="entry name" value="UBX domain-containing protein 4"/>
    <property type="match status" value="1"/>
</dbReference>
<dbReference type="FunFam" id="3.40.30.10:FF:000163">
    <property type="entry name" value="UBX domain-containing protein 4"/>
    <property type="match status" value="1"/>
</dbReference>
<dbReference type="Gene3D" id="3.40.30.10">
    <property type="entry name" value="Glutaredoxin"/>
    <property type="match status" value="1"/>
</dbReference>
<dbReference type="Gene3D" id="3.10.20.90">
    <property type="entry name" value="Phosphatidylinositol 3-kinase Catalytic Subunit, Chain A, domain 1"/>
    <property type="match status" value="1"/>
</dbReference>
<dbReference type="InterPro" id="IPR036249">
    <property type="entry name" value="Thioredoxin-like_sf"/>
</dbReference>
<dbReference type="InterPro" id="IPR029071">
    <property type="entry name" value="Ubiquitin-like_domsf"/>
</dbReference>
<dbReference type="InterPro" id="IPR001012">
    <property type="entry name" value="UBX_dom"/>
</dbReference>
<dbReference type="PANTHER" id="PTHR46424">
    <property type="entry name" value="UBX DOMAIN-CONTAINING PROTEIN 4"/>
    <property type="match status" value="1"/>
</dbReference>
<dbReference type="PANTHER" id="PTHR46424:SF1">
    <property type="entry name" value="UBX DOMAIN-CONTAINING PROTEIN 4"/>
    <property type="match status" value="1"/>
</dbReference>
<dbReference type="Pfam" id="PF00789">
    <property type="entry name" value="UBX"/>
    <property type="match status" value="1"/>
</dbReference>
<dbReference type="Pfam" id="PF23187">
    <property type="entry name" value="UBX7_N"/>
    <property type="match status" value="1"/>
</dbReference>
<dbReference type="SMART" id="SM00166">
    <property type="entry name" value="UBX"/>
    <property type="match status" value="1"/>
</dbReference>
<dbReference type="SUPFAM" id="SSF52833">
    <property type="entry name" value="Thioredoxin-like"/>
    <property type="match status" value="1"/>
</dbReference>
<dbReference type="SUPFAM" id="SSF54236">
    <property type="entry name" value="Ubiquitin-like"/>
    <property type="match status" value="1"/>
</dbReference>
<dbReference type="PROSITE" id="PS50033">
    <property type="entry name" value="UBX"/>
    <property type="match status" value="1"/>
</dbReference>
<comment type="function">
    <text evidence="1">Involved in endoplasmic reticulum-associated protein degradation (ERAD). Acts as a platform to recruit both UBQLN1 and VCP to the ER during ERAD.</text>
</comment>
<comment type="subunit">
    <text evidence="1">Directly interacts with VCP. Interacts with UBQLN1. Forms a complex with VCP and UBQLN1.</text>
</comment>
<comment type="subcellular location">
    <subcellularLocation>
        <location evidence="1">Endoplasmic reticulum membrane</location>
        <topology evidence="1">Peripheral membrane protein</topology>
    </subcellularLocation>
    <subcellularLocation>
        <location evidence="1">Nucleus envelope</location>
    </subcellularLocation>
    <text evidence="1">Both the N- and the C-terminus face the cytosol. Also found in the nucleus envelope contiguous to the ER.</text>
</comment>
<comment type="domain">
    <text evidence="1">The UBX domain is required for interaction with VCP.</text>
</comment>
<comment type="domain">
    <text evidence="1">The intramembrane domain also contains the signal for ER targeting.</text>
</comment>
<comment type="sequence caution" evidence="5">
    <conflict type="erroneous termination">
        <sequence resource="EMBL-CDS" id="AAI03097"/>
    </conflict>
    <text>Truncated C-terminus.</text>
</comment>
<proteinExistence type="evidence at transcript level"/>
<keyword id="KW-0256">Endoplasmic reticulum</keyword>
<keyword id="KW-0472">Membrane</keyword>
<keyword id="KW-0539">Nucleus</keyword>
<keyword id="KW-0597">Phosphoprotein</keyword>
<keyword id="KW-1185">Reference proteome</keyword>
<keyword id="KW-0834">Unfolded protein response</keyword>
<feature type="chain" id="PRO_0000317474" description="UBX domain-containing protein 4">
    <location>
        <begin position="1"/>
        <end position="508"/>
    </location>
</feature>
<feature type="topological domain" description="Cytoplasmic" evidence="2">
    <location>
        <begin position="1"/>
        <end position="413"/>
    </location>
</feature>
<feature type="intramembrane region" evidence="2">
    <location>
        <begin position="414"/>
        <end position="434"/>
    </location>
</feature>
<feature type="topological domain" description="Cytoplasmic" evidence="2">
    <location>
        <begin position="435"/>
        <end position="508"/>
    </location>
</feature>
<feature type="domain" description="UBX" evidence="3">
    <location>
        <begin position="315"/>
        <end position="393"/>
    </location>
</feature>
<feature type="region of interest" description="Interaction with UBQLN1" evidence="1">
    <location>
        <begin position="1"/>
        <end position="200"/>
    </location>
</feature>
<feature type="region of interest" description="Disordered" evidence="4">
    <location>
        <begin position="117"/>
        <end position="199"/>
    </location>
</feature>
<feature type="region of interest" description="Disordered" evidence="4">
    <location>
        <begin position="450"/>
        <end position="508"/>
    </location>
</feature>
<feature type="compositionally biased region" description="Polar residues" evidence="4">
    <location>
        <begin position="122"/>
        <end position="190"/>
    </location>
</feature>
<feature type="compositionally biased region" description="Polar residues" evidence="4">
    <location>
        <begin position="450"/>
        <end position="459"/>
    </location>
</feature>
<feature type="compositionally biased region" description="Basic and acidic residues" evidence="4">
    <location>
        <begin position="460"/>
        <end position="491"/>
    </location>
</feature>
<feature type="compositionally biased region" description="Polar residues" evidence="4">
    <location>
        <begin position="498"/>
        <end position="508"/>
    </location>
</feature>
<feature type="modified residue" description="Phosphothreonine" evidence="1">
    <location>
        <position position="489"/>
    </location>
</feature>
<protein>
    <recommendedName>
        <fullName>UBX domain-containing protein 4</fullName>
    </recommendedName>
    <alternativeName>
        <fullName>UBX domain-containing protein 2</fullName>
    </alternativeName>
</protein>
<accession>Q3ZBU9</accession>